<organism>
    <name type="scientific">Dichelobacter nodosus (strain VCS1703A)</name>
    <dbReference type="NCBI Taxonomy" id="246195"/>
    <lineage>
        <taxon>Bacteria</taxon>
        <taxon>Pseudomonadati</taxon>
        <taxon>Pseudomonadota</taxon>
        <taxon>Gammaproteobacteria</taxon>
        <taxon>Cardiobacteriales</taxon>
        <taxon>Cardiobacteriaceae</taxon>
        <taxon>Dichelobacter</taxon>
    </lineage>
</organism>
<proteinExistence type="inferred from homology"/>
<comment type="catalytic activity">
    <reaction evidence="1">
        <text>tRNA(Lys) + L-lysine + ATP = L-lysyl-tRNA(Lys) + AMP + diphosphate</text>
        <dbReference type="Rhea" id="RHEA:20792"/>
        <dbReference type="Rhea" id="RHEA-COMP:9696"/>
        <dbReference type="Rhea" id="RHEA-COMP:9697"/>
        <dbReference type="ChEBI" id="CHEBI:30616"/>
        <dbReference type="ChEBI" id="CHEBI:32551"/>
        <dbReference type="ChEBI" id="CHEBI:33019"/>
        <dbReference type="ChEBI" id="CHEBI:78442"/>
        <dbReference type="ChEBI" id="CHEBI:78529"/>
        <dbReference type="ChEBI" id="CHEBI:456215"/>
        <dbReference type="EC" id="6.1.1.6"/>
    </reaction>
</comment>
<comment type="cofactor">
    <cofactor evidence="1">
        <name>Mg(2+)</name>
        <dbReference type="ChEBI" id="CHEBI:18420"/>
    </cofactor>
    <text evidence="1">Binds 3 Mg(2+) ions per subunit.</text>
</comment>
<comment type="subunit">
    <text evidence="1">Homodimer.</text>
</comment>
<comment type="subcellular location">
    <subcellularLocation>
        <location evidence="1">Cytoplasm</location>
    </subcellularLocation>
</comment>
<comment type="similarity">
    <text evidence="1">Belongs to the class-II aminoacyl-tRNA synthetase family.</text>
</comment>
<reference key="1">
    <citation type="journal article" date="2007" name="Nat. Biotechnol.">
        <title>Genome sequence and identification of candidate vaccine antigens from the animal pathogen Dichelobacter nodosus.</title>
        <authorList>
            <person name="Myers G.S.A."/>
            <person name="Parker D."/>
            <person name="Al-Hasani K."/>
            <person name="Kennan R.M."/>
            <person name="Seemann T."/>
            <person name="Ren Q."/>
            <person name="Badger J.H."/>
            <person name="Selengut J.D."/>
            <person name="Deboy R.T."/>
            <person name="Tettelin H."/>
            <person name="Boyce J.D."/>
            <person name="McCarl V.P."/>
            <person name="Han X."/>
            <person name="Nelson W.C."/>
            <person name="Madupu R."/>
            <person name="Mohamoud Y."/>
            <person name="Holley T."/>
            <person name="Fedorova N."/>
            <person name="Khouri H."/>
            <person name="Bottomley S.P."/>
            <person name="Whittington R.J."/>
            <person name="Adler B."/>
            <person name="Songer J.G."/>
            <person name="Rood J.I."/>
            <person name="Paulsen I.T."/>
        </authorList>
    </citation>
    <scope>NUCLEOTIDE SEQUENCE [LARGE SCALE GENOMIC DNA]</scope>
    <source>
        <strain>VCS1703A</strain>
    </source>
</reference>
<dbReference type="EC" id="6.1.1.6" evidence="1"/>
<dbReference type="EMBL" id="CP000513">
    <property type="protein sequence ID" value="ABQ13320.1"/>
    <property type="molecule type" value="Genomic_DNA"/>
</dbReference>
<dbReference type="RefSeq" id="WP_012031254.1">
    <property type="nucleotide sequence ID" value="NC_009446.1"/>
</dbReference>
<dbReference type="SMR" id="A5EY50"/>
<dbReference type="STRING" id="246195.DNO_0938"/>
<dbReference type="KEGG" id="dno:DNO_0938"/>
<dbReference type="eggNOG" id="COG1190">
    <property type="taxonomic scope" value="Bacteria"/>
</dbReference>
<dbReference type="HOGENOM" id="CLU_008255_6_0_6"/>
<dbReference type="OrthoDB" id="9802326at2"/>
<dbReference type="Proteomes" id="UP000000248">
    <property type="component" value="Chromosome"/>
</dbReference>
<dbReference type="GO" id="GO:0005829">
    <property type="term" value="C:cytosol"/>
    <property type="evidence" value="ECO:0007669"/>
    <property type="project" value="TreeGrafter"/>
</dbReference>
<dbReference type="GO" id="GO:0005524">
    <property type="term" value="F:ATP binding"/>
    <property type="evidence" value="ECO:0007669"/>
    <property type="project" value="UniProtKB-UniRule"/>
</dbReference>
<dbReference type="GO" id="GO:0004824">
    <property type="term" value="F:lysine-tRNA ligase activity"/>
    <property type="evidence" value="ECO:0007669"/>
    <property type="project" value="UniProtKB-UniRule"/>
</dbReference>
<dbReference type="GO" id="GO:0000287">
    <property type="term" value="F:magnesium ion binding"/>
    <property type="evidence" value="ECO:0007669"/>
    <property type="project" value="UniProtKB-UniRule"/>
</dbReference>
<dbReference type="GO" id="GO:0000049">
    <property type="term" value="F:tRNA binding"/>
    <property type="evidence" value="ECO:0007669"/>
    <property type="project" value="TreeGrafter"/>
</dbReference>
<dbReference type="GO" id="GO:0006430">
    <property type="term" value="P:lysyl-tRNA aminoacylation"/>
    <property type="evidence" value="ECO:0007669"/>
    <property type="project" value="UniProtKB-UniRule"/>
</dbReference>
<dbReference type="CDD" id="cd00775">
    <property type="entry name" value="LysRS_core"/>
    <property type="match status" value="1"/>
</dbReference>
<dbReference type="CDD" id="cd04322">
    <property type="entry name" value="LysRS_N"/>
    <property type="match status" value="1"/>
</dbReference>
<dbReference type="FunFam" id="2.40.50.140:FF:000024">
    <property type="entry name" value="Lysine--tRNA ligase"/>
    <property type="match status" value="1"/>
</dbReference>
<dbReference type="FunFam" id="3.30.930.10:FF:000001">
    <property type="entry name" value="Lysine--tRNA ligase"/>
    <property type="match status" value="1"/>
</dbReference>
<dbReference type="Gene3D" id="3.30.930.10">
    <property type="entry name" value="Bira Bifunctional Protein, Domain 2"/>
    <property type="match status" value="1"/>
</dbReference>
<dbReference type="Gene3D" id="2.40.50.140">
    <property type="entry name" value="Nucleic acid-binding proteins"/>
    <property type="match status" value="1"/>
</dbReference>
<dbReference type="HAMAP" id="MF_00252">
    <property type="entry name" value="Lys_tRNA_synth_class2"/>
    <property type="match status" value="1"/>
</dbReference>
<dbReference type="InterPro" id="IPR004364">
    <property type="entry name" value="Aa-tRNA-synt_II"/>
</dbReference>
<dbReference type="InterPro" id="IPR006195">
    <property type="entry name" value="aa-tRNA-synth_II"/>
</dbReference>
<dbReference type="InterPro" id="IPR045864">
    <property type="entry name" value="aa-tRNA-synth_II/BPL/LPL"/>
</dbReference>
<dbReference type="InterPro" id="IPR002313">
    <property type="entry name" value="Lys-tRNA-ligase_II"/>
</dbReference>
<dbReference type="InterPro" id="IPR044136">
    <property type="entry name" value="Lys-tRNA-ligase_II_N"/>
</dbReference>
<dbReference type="InterPro" id="IPR018149">
    <property type="entry name" value="Lys-tRNA-synth_II_C"/>
</dbReference>
<dbReference type="InterPro" id="IPR012340">
    <property type="entry name" value="NA-bd_OB-fold"/>
</dbReference>
<dbReference type="InterPro" id="IPR004365">
    <property type="entry name" value="NA-bd_OB_tRNA"/>
</dbReference>
<dbReference type="NCBIfam" id="TIGR00499">
    <property type="entry name" value="lysS_bact"/>
    <property type="match status" value="1"/>
</dbReference>
<dbReference type="NCBIfam" id="NF001756">
    <property type="entry name" value="PRK00484.1"/>
    <property type="match status" value="1"/>
</dbReference>
<dbReference type="PANTHER" id="PTHR42918:SF15">
    <property type="entry name" value="LYSINE--TRNA LIGASE, CHLOROPLASTIC_MITOCHONDRIAL"/>
    <property type="match status" value="1"/>
</dbReference>
<dbReference type="PANTHER" id="PTHR42918">
    <property type="entry name" value="LYSYL-TRNA SYNTHETASE"/>
    <property type="match status" value="1"/>
</dbReference>
<dbReference type="Pfam" id="PF00152">
    <property type="entry name" value="tRNA-synt_2"/>
    <property type="match status" value="1"/>
</dbReference>
<dbReference type="Pfam" id="PF01336">
    <property type="entry name" value="tRNA_anti-codon"/>
    <property type="match status" value="1"/>
</dbReference>
<dbReference type="PRINTS" id="PR00982">
    <property type="entry name" value="TRNASYNTHLYS"/>
</dbReference>
<dbReference type="SUPFAM" id="SSF55681">
    <property type="entry name" value="Class II aaRS and biotin synthetases"/>
    <property type="match status" value="1"/>
</dbReference>
<dbReference type="SUPFAM" id="SSF50249">
    <property type="entry name" value="Nucleic acid-binding proteins"/>
    <property type="match status" value="1"/>
</dbReference>
<dbReference type="PROSITE" id="PS50862">
    <property type="entry name" value="AA_TRNA_LIGASE_II"/>
    <property type="match status" value="1"/>
</dbReference>
<sequence length="498" mass="56750">MSHNEKIQDENKLIAERRQKLQKIRDTQKIAFPNDARPTHKAAQLHRDFDHGDEAALSQAGTVAIAGRMMGKRVMGKASFVHVQDGSGEQIQLYVSSDALTEEVYEEFKTWDVGDIIFASGSLFRTKTGELTVQTNAIRLLTKSLRPLPDKFHGLTDQEIRYRQRYVDLMVNAQSRDVFKARSKIISYIRHFFEARDFLEVETPMMHPIPGGAAAKPFITHHNALDMPLYLRIAPELYLKRLVVGGFERVFEINRNFRNEGVSARHNPEFTMLEFYQAYADYNDLMDLSEVLFQGLAQTILGTTKFDYQGTEIDFSQFRRLPMRDAVCQYVPEAANILEDAPKMVQLLKEKFHIDAGNESDCGKLMTMIFEEGVEHLLIQPTFVIEYPAVVSPLSRRNDENPDITDRFELFIGGREIANGFSELNDAEDQAERFKEQAAAFEAGDEEAMHYDGDFVRALEYGLPPTAGQGIGIDRLVMLLTNAPSIRDVLLFPHMRPE</sequence>
<evidence type="ECO:0000255" key="1">
    <source>
        <dbReference type="HAMAP-Rule" id="MF_00252"/>
    </source>
</evidence>
<name>SYK_DICNV</name>
<gene>
    <name evidence="1" type="primary">lysS</name>
    <name type="ordered locus">DNO_0938</name>
</gene>
<feature type="chain" id="PRO_1000101115" description="Lysine--tRNA ligase">
    <location>
        <begin position="1"/>
        <end position="498"/>
    </location>
</feature>
<feature type="binding site" evidence="1">
    <location>
        <position position="409"/>
    </location>
    <ligand>
        <name>Mg(2+)</name>
        <dbReference type="ChEBI" id="CHEBI:18420"/>
        <label>1</label>
    </ligand>
</feature>
<feature type="binding site" evidence="1">
    <location>
        <position position="416"/>
    </location>
    <ligand>
        <name>Mg(2+)</name>
        <dbReference type="ChEBI" id="CHEBI:18420"/>
        <label>1</label>
    </ligand>
</feature>
<feature type="binding site" evidence="1">
    <location>
        <position position="416"/>
    </location>
    <ligand>
        <name>Mg(2+)</name>
        <dbReference type="ChEBI" id="CHEBI:18420"/>
        <label>2</label>
    </ligand>
</feature>
<accession>A5EY50</accession>
<protein>
    <recommendedName>
        <fullName evidence="1">Lysine--tRNA ligase</fullName>
        <ecNumber evidence="1">6.1.1.6</ecNumber>
    </recommendedName>
    <alternativeName>
        <fullName evidence="1">Lysyl-tRNA synthetase</fullName>
        <shortName evidence="1">LysRS</shortName>
    </alternativeName>
</protein>
<keyword id="KW-0030">Aminoacyl-tRNA synthetase</keyword>
<keyword id="KW-0067">ATP-binding</keyword>
<keyword id="KW-0963">Cytoplasm</keyword>
<keyword id="KW-0436">Ligase</keyword>
<keyword id="KW-0460">Magnesium</keyword>
<keyword id="KW-0479">Metal-binding</keyword>
<keyword id="KW-0547">Nucleotide-binding</keyword>
<keyword id="KW-0648">Protein biosynthesis</keyword>
<keyword id="KW-1185">Reference proteome</keyword>